<reference key="1">
    <citation type="journal article" date="2009" name="PLoS ONE">
        <title>Genome analysis of the anaerobic thermohalophilic bacterium Halothermothrix orenii.</title>
        <authorList>
            <person name="Mavromatis K."/>
            <person name="Ivanova N."/>
            <person name="Anderson I."/>
            <person name="Lykidis A."/>
            <person name="Hooper S.D."/>
            <person name="Sun H."/>
            <person name="Kunin V."/>
            <person name="Lapidus A."/>
            <person name="Hugenholtz P."/>
            <person name="Patel B."/>
            <person name="Kyrpides N.C."/>
        </authorList>
    </citation>
    <scope>NUCLEOTIDE SEQUENCE [LARGE SCALE GENOMIC DNA]</scope>
    <source>
        <strain>H 168 / OCM 544 / DSM 9562</strain>
    </source>
</reference>
<organism>
    <name type="scientific">Halothermothrix orenii (strain H 168 / OCM 544 / DSM 9562)</name>
    <dbReference type="NCBI Taxonomy" id="373903"/>
    <lineage>
        <taxon>Bacteria</taxon>
        <taxon>Bacillati</taxon>
        <taxon>Bacillota</taxon>
        <taxon>Clostridia</taxon>
        <taxon>Halanaerobiales</taxon>
        <taxon>Halothermotrichaceae</taxon>
        <taxon>Halothermothrix</taxon>
    </lineage>
</organism>
<name>PLSX_HALOH</name>
<accession>B8CWW2</accession>
<feature type="chain" id="PRO_1000193137" description="Phosphate acyltransferase">
    <location>
        <begin position="1"/>
        <end position="334"/>
    </location>
</feature>
<dbReference type="EC" id="2.3.1.274" evidence="1"/>
<dbReference type="EMBL" id="CP001098">
    <property type="protein sequence ID" value="ACL69781.1"/>
    <property type="molecule type" value="Genomic_DNA"/>
</dbReference>
<dbReference type="RefSeq" id="WP_012635966.1">
    <property type="nucleotide sequence ID" value="NC_011899.1"/>
</dbReference>
<dbReference type="SMR" id="B8CWW2"/>
<dbReference type="STRING" id="373903.Hore_10250"/>
<dbReference type="KEGG" id="hor:Hore_10250"/>
<dbReference type="eggNOG" id="COG0416">
    <property type="taxonomic scope" value="Bacteria"/>
</dbReference>
<dbReference type="HOGENOM" id="CLU_039379_1_1_9"/>
<dbReference type="OrthoDB" id="9806408at2"/>
<dbReference type="UniPathway" id="UPA00085"/>
<dbReference type="Proteomes" id="UP000000719">
    <property type="component" value="Chromosome"/>
</dbReference>
<dbReference type="GO" id="GO:0005737">
    <property type="term" value="C:cytoplasm"/>
    <property type="evidence" value="ECO:0007669"/>
    <property type="project" value="UniProtKB-SubCell"/>
</dbReference>
<dbReference type="GO" id="GO:0043811">
    <property type="term" value="F:phosphate:acyl-[acyl carrier protein] acyltransferase activity"/>
    <property type="evidence" value="ECO:0007669"/>
    <property type="project" value="UniProtKB-UniRule"/>
</dbReference>
<dbReference type="GO" id="GO:0006633">
    <property type="term" value="P:fatty acid biosynthetic process"/>
    <property type="evidence" value="ECO:0007669"/>
    <property type="project" value="UniProtKB-UniRule"/>
</dbReference>
<dbReference type="GO" id="GO:0008654">
    <property type="term" value="P:phospholipid biosynthetic process"/>
    <property type="evidence" value="ECO:0007669"/>
    <property type="project" value="UniProtKB-KW"/>
</dbReference>
<dbReference type="Gene3D" id="3.40.718.10">
    <property type="entry name" value="Isopropylmalate Dehydrogenase"/>
    <property type="match status" value="1"/>
</dbReference>
<dbReference type="HAMAP" id="MF_00019">
    <property type="entry name" value="PlsX"/>
    <property type="match status" value="1"/>
</dbReference>
<dbReference type="InterPro" id="IPR003664">
    <property type="entry name" value="FA_synthesis"/>
</dbReference>
<dbReference type="InterPro" id="IPR012281">
    <property type="entry name" value="Phospholipid_synth_PlsX-like"/>
</dbReference>
<dbReference type="NCBIfam" id="TIGR00182">
    <property type="entry name" value="plsX"/>
    <property type="match status" value="1"/>
</dbReference>
<dbReference type="PANTHER" id="PTHR30100">
    <property type="entry name" value="FATTY ACID/PHOSPHOLIPID SYNTHESIS PROTEIN PLSX"/>
    <property type="match status" value="1"/>
</dbReference>
<dbReference type="PANTHER" id="PTHR30100:SF1">
    <property type="entry name" value="PHOSPHATE ACYLTRANSFERASE"/>
    <property type="match status" value="1"/>
</dbReference>
<dbReference type="Pfam" id="PF02504">
    <property type="entry name" value="FA_synthesis"/>
    <property type="match status" value="1"/>
</dbReference>
<dbReference type="PIRSF" id="PIRSF002465">
    <property type="entry name" value="Phsphlp_syn_PlsX"/>
    <property type="match status" value="1"/>
</dbReference>
<dbReference type="SUPFAM" id="SSF53659">
    <property type="entry name" value="Isocitrate/Isopropylmalate dehydrogenase-like"/>
    <property type="match status" value="1"/>
</dbReference>
<keyword id="KW-0963">Cytoplasm</keyword>
<keyword id="KW-0444">Lipid biosynthesis</keyword>
<keyword id="KW-0443">Lipid metabolism</keyword>
<keyword id="KW-0594">Phospholipid biosynthesis</keyword>
<keyword id="KW-1208">Phospholipid metabolism</keyword>
<keyword id="KW-1185">Reference proteome</keyword>
<keyword id="KW-0808">Transferase</keyword>
<proteinExistence type="inferred from homology"/>
<evidence type="ECO:0000255" key="1">
    <source>
        <dbReference type="HAMAP-Rule" id="MF_00019"/>
    </source>
</evidence>
<protein>
    <recommendedName>
        <fullName evidence="1">Phosphate acyltransferase</fullName>
        <ecNumber evidence="1">2.3.1.274</ecNumber>
    </recommendedName>
    <alternativeName>
        <fullName evidence="1">Acyl-ACP phosphotransacylase</fullName>
    </alternativeName>
    <alternativeName>
        <fullName evidence="1">Acyl-[acyl-carrier-protein]--phosphate acyltransferase</fullName>
    </alternativeName>
    <alternativeName>
        <fullName evidence="1">Phosphate-acyl-ACP acyltransferase</fullName>
    </alternativeName>
</protein>
<sequence>MRIVIDGMGGDKAPEEIIKGAVSALDSYEDIELIITGIEKHLNRELNKYNFPEDRVKIIPASEIISMNESPSKALRKKKDSSIVKGINLVKEDKATAFISAGNTGAVMAGGLFLLGRLPSIKRPAIATVFPSRNGGTLVIDAGANVDSKPENLNQFAIMGQIYSKHVLGVKNPRVGLLSIGEEQAKGNQLTKGAFSLLDEDKRIINFVGNVEGRDIFNGSCDVVVCDGFVGNVVLKTTEGAASYIFDLIKDTFNKNILTKLSGLMIKPFLKKQMALVDYRQYGGAPLLGVNGVVIISHGSSNSTAIKNAIKVAKETVNKNVVGLIKQEINKDGE</sequence>
<gene>
    <name evidence="1" type="primary">plsX</name>
    <name type="ordered locus">Hore_10250</name>
</gene>
<comment type="function">
    <text evidence="1">Catalyzes the reversible formation of acyl-phosphate (acyl-PO(4)) from acyl-[acyl-carrier-protein] (acyl-ACP). This enzyme utilizes acyl-ACP as fatty acyl donor, but not acyl-CoA.</text>
</comment>
<comment type="catalytic activity">
    <reaction evidence="1">
        <text>a fatty acyl-[ACP] + phosphate = an acyl phosphate + holo-[ACP]</text>
        <dbReference type="Rhea" id="RHEA:42292"/>
        <dbReference type="Rhea" id="RHEA-COMP:9685"/>
        <dbReference type="Rhea" id="RHEA-COMP:14125"/>
        <dbReference type="ChEBI" id="CHEBI:43474"/>
        <dbReference type="ChEBI" id="CHEBI:59918"/>
        <dbReference type="ChEBI" id="CHEBI:64479"/>
        <dbReference type="ChEBI" id="CHEBI:138651"/>
        <dbReference type="EC" id="2.3.1.274"/>
    </reaction>
</comment>
<comment type="pathway">
    <text evidence="1">Lipid metabolism; phospholipid metabolism.</text>
</comment>
<comment type="subunit">
    <text evidence="1">Homodimer. Probably interacts with PlsY.</text>
</comment>
<comment type="subcellular location">
    <subcellularLocation>
        <location evidence="1">Cytoplasm</location>
    </subcellularLocation>
    <text evidence="1">Associated with the membrane possibly through PlsY.</text>
</comment>
<comment type="similarity">
    <text evidence="1">Belongs to the PlsX family.</text>
</comment>